<comment type="function">
    <text evidence="1">Catalyzes the synthesis of GMP from XMP.</text>
</comment>
<comment type="catalytic activity">
    <reaction evidence="1">
        <text>XMP + L-glutamine + ATP + H2O = GMP + L-glutamate + AMP + diphosphate + 2 H(+)</text>
        <dbReference type="Rhea" id="RHEA:11680"/>
        <dbReference type="ChEBI" id="CHEBI:15377"/>
        <dbReference type="ChEBI" id="CHEBI:15378"/>
        <dbReference type="ChEBI" id="CHEBI:29985"/>
        <dbReference type="ChEBI" id="CHEBI:30616"/>
        <dbReference type="ChEBI" id="CHEBI:33019"/>
        <dbReference type="ChEBI" id="CHEBI:57464"/>
        <dbReference type="ChEBI" id="CHEBI:58115"/>
        <dbReference type="ChEBI" id="CHEBI:58359"/>
        <dbReference type="ChEBI" id="CHEBI:456215"/>
        <dbReference type="EC" id="6.3.5.2"/>
    </reaction>
</comment>
<comment type="pathway">
    <text evidence="1">Purine metabolism; GMP biosynthesis; GMP from XMP (L-Gln route): step 1/1.</text>
</comment>
<comment type="subunit">
    <text evidence="1">Homodimer.</text>
</comment>
<evidence type="ECO:0000255" key="1">
    <source>
        <dbReference type="HAMAP-Rule" id="MF_00344"/>
    </source>
</evidence>
<feature type="chain" id="PRO_1000120407" description="GMP synthase [glutamine-hydrolyzing]">
    <location>
        <begin position="1"/>
        <end position="525"/>
    </location>
</feature>
<feature type="domain" description="Glutamine amidotransferase type-1" evidence="1">
    <location>
        <begin position="8"/>
        <end position="207"/>
    </location>
</feature>
<feature type="domain" description="GMPS ATP-PPase" evidence="1">
    <location>
        <begin position="208"/>
        <end position="400"/>
    </location>
</feature>
<feature type="active site" description="Nucleophile" evidence="1">
    <location>
        <position position="85"/>
    </location>
</feature>
<feature type="active site" evidence="1">
    <location>
        <position position="181"/>
    </location>
</feature>
<feature type="active site" evidence="1">
    <location>
        <position position="183"/>
    </location>
</feature>
<feature type="binding site" evidence="1">
    <location>
        <begin position="235"/>
        <end position="241"/>
    </location>
    <ligand>
        <name>ATP</name>
        <dbReference type="ChEBI" id="CHEBI:30616"/>
    </ligand>
</feature>
<reference key="1">
    <citation type="journal article" date="2008" name="PLoS ONE">
        <title>Environmental adaptation: genomic analysis of the piezotolerant and psychrotolerant deep-sea iron reducing bacterium Shewanella piezotolerans WP3.</title>
        <authorList>
            <person name="Wang F."/>
            <person name="Wang J."/>
            <person name="Jian H."/>
            <person name="Zhang B."/>
            <person name="Li S."/>
            <person name="Wang F."/>
            <person name="Zeng X."/>
            <person name="Gao L."/>
            <person name="Bartlett D.H."/>
            <person name="Yu J."/>
            <person name="Hu S."/>
            <person name="Xiao X."/>
        </authorList>
    </citation>
    <scope>NUCLEOTIDE SEQUENCE [LARGE SCALE GENOMIC DNA]</scope>
    <source>
        <strain>WP3 / JCM 13877</strain>
    </source>
</reference>
<accession>B8CKS4</accession>
<keyword id="KW-0067">ATP-binding</keyword>
<keyword id="KW-0315">Glutamine amidotransferase</keyword>
<keyword id="KW-0332">GMP biosynthesis</keyword>
<keyword id="KW-0436">Ligase</keyword>
<keyword id="KW-0547">Nucleotide-binding</keyword>
<keyword id="KW-0658">Purine biosynthesis</keyword>
<gene>
    <name evidence="1" type="primary">guaA</name>
    <name type="ordered locus">swp_1464</name>
</gene>
<sequence>MSNIHEHKILILDFGSQYTQLIARRIREIGVYCELWAWDVSEEQIRGFAPNGIILAGGPESVTADNSPRAPEYVFNAGVPVLGICYGMQTMSEQLGGKVIQGVGEGEFGYAQVEVQTESALFKAIEDAVSETGKPLLDVWMSHGDKVSEIPDGFVTVANTETCPFAAMANEDKKFYGVQFHPEVTHTRQGKRMLEHFALDICGCDANWKPSSIIEDAVERLKKQIGDDEVILGLSGGVDSSVVAMLLHRAIGDKLTCVFVDNGLLRLNEAQQVMDMFGDHFGLNIIHVDAENRFLDAMAGEADPESKRKIIGHVFVEIFDEESKKCANAKWLAQGTIYPDVIESAGSATGKAHVIKSHHNVGGLPDDMELGLVEPLRELFKDEVRKIGLELGLPYDMLYRHPFPGPGLGVRVLGEVKKEYCDLLRLADAIFIEELHKADLYNKVSQAFTVFLPVRSVGVMGDGRKYDWVVSLRAVETIDFMTAHWAHLPYDFLGRVSNRIINEIDGISRVVYDISGKPPATIEWE</sequence>
<proteinExistence type="inferred from homology"/>
<organism>
    <name type="scientific">Shewanella piezotolerans (strain WP3 / JCM 13877)</name>
    <dbReference type="NCBI Taxonomy" id="225849"/>
    <lineage>
        <taxon>Bacteria</taxon>
        <taxon>Pseudomonadati</taxon>
        <taxon>Pseudomonadota</taxon>
        <taxon>Gammaproteobacteria</taxon>
        <taxon>Alteromonadales</taxon>
        <taxon>Shewanellaceae</taxon>
        <taxon>Shewanella</taxon>
    </lineage>
</organism>
<protein>
    <recommendedName>
        <fullName evidence="1">GMP synthase [glutamine-hydrolyzing]</fullName>
        <ecNumber evidence="1">6.3.5.2</ecNumber>
    </recommendedName>
    <alternativeName>
        <fullName evidence="1">GMP synthetase</fullName>
    </alternativeName>
    <alternativeName>
        <fullName evidence="1">Glutamine amidotransferase</fullName>
    </alternativeName>
</protein>
<dbReference type="EC" id="6.3.5.2" evidence="1"/>
<dbReference type="EMBL" id="CP000472">
    <property type="protein sequence ID" value="ACJ28250.1"/>
    <property type="molecule type" value="Genomic_DNA"/>
</dbReference>
<dbReference type="RefSeq" id="WP_020911628.1">
    <property type="nucleotide sequence ID" value="NC_011566.1"/>
</dbReference>
<dbReference type="SMR" id="B8CKS4"/>
<dbReference type="STRING" id="225849.swp_1464"/>
<dbReference type="MEROPS" id="C26.A07"/>
<dbReference type="KEGG" id="swp:swp_1464"/>
<dbReference type="eggNOG" id="COG0518">
    <property type="taxonomic scope" value="Bacteria"/>
</dbReference>
<dbReference type="eggNOG" id="COG0519">
    <property type="taxonomic scope" value="Bacteria"/>
</dbReference>
<dbReference type="HOGENOM" id="CLU_014340_0_5_6"/>
<dbReference type="OrthoDB" id="9802219at2"/>
<dbReference type="UniPathway" id="UPA00189">
    <property type="reaction ID" value="UER00296"/>
</dbReference>
<dbReference type="Proteomes" id="UP000000753">
    <property type="component" value="Chromosome"/>
</dbReference>
<dbReference type="GO" id="GO:0005829">
    <property type="term" value="C:cytosol"/>
    <property type="evidence" value="ECO:0007669"/>
    <property type="project" value="TreeGrafter"/>
</dbReference>
<dbReference type="GO" id="GO:0005524">
    <property type="term" value="F:ATP binding"/>
    <property type="evidence" value="ECO:0007669"/>
    <property type="project" value="UniProtKB-UniRule"/>
</dbReference>
<dbReference type="GO" id="GO:0003921">
    <property type="term" value="F:GMP synthase activity"/>
    <property type="evidence" value="ECO:0007669"/>
    <property type="project" value="InterPro"/>
</dbReference>
<dbReference type="CDD" id="cd01742">
    <property type="entry name" value="GATase1_GMP_Synthase"/>
    <property type="match status" value="1"/>
</dbReference>
<dbReference type="CDD" id="cd01997">
    <property type="entry name" value="GMP_synthase_C"/>
    <property type="match status" value="1"/>
</dbReference>
<dbReference type="FunFam" id="3.30.300.10:FF:000002">
    <property type="entry name" value="GMP synthase [glutamine-hydrolyzing]"/>
    <property type="match status" value="1"/>
</dbReference>
<dbReference type="FunFam" id="3.40.50.620:FF:000001">
    <property type="entry name" value="GMP synthase [glutamine-hydrolyzing]"/>
    <property type="match status" value="1"/>
</dbReference>
<dbReference type="FunFam" id="3.40.50.880:FF:000001">
    <property type="entry name" value="GMP synthase [glutamine-hydrolyzing]"/>
    <property type="match status" value="1"/>
</dbReference>
<dbReference type="Gene3D" id="3.30.300.10">
    <property type="match status" value="1"/>
</dbReference>
<dbReference type="Gene3D" id="3.40.50.880">
    <property type="match status" value="1"/>
</dbReference>
<dbReference type="Gene3D" id="3.40.50.620">
    <property type="entry name" value="HUPs"/>
    <property type="match status" value="1"/>
</dbReference>
<dbReference type="HAMAP" id="MF_00344">
    <property type="entry name" value="GMP_synthase"/>
    <property type="match status" value="1"/>
</dbReference>
<dbReference type="InterPro" id="IPR029062">
    <property type="entry name" value="Class_I_gatase-like"/>
</dbReference>
<dbReference type="InterPro" id="IPR017926">
    <property type="entry name" value="GATASE"/>
</dbReference>
<dbReference type="InterPro" id="IPR001674">
    <property type="entry name" value="GMP_synth_C"/>
</dbReference>
<dbReference type="InterPro" id="IPR004739">
    <property type="entry name" value="GMP_synth_GATase"/>
</dbReference>
<dbReference type="InterPro" id="IPR022955">
    <property type="entry name" value="GMP_synthase"/>
</dbReference>
<dbReference type="InterPro" id="IPR025777">
    <property type="entry name" value="GMPS_ATP_PPase_dom"/>
</dbReference>
<dbReference type="InterPro" id="IPR022310">
    <property type="entry name" value="NAD/GMP_synthase"/>
</dbReference>
<dbReference type="InterPro" id="IPR014729">
    <property type="entry name" value="Rossmann-like_a/b/a_fold"/>
</dbReference>
<dbReference type="NCBIfam" id="TIGR00884">
    <property type="entry name" value="guaA_Cterm"/>
    <property type="match status" value="1"/>
</dbReference>
<dbReference type="NCBIfam" id="TIGR00888">
    <property type="entry name" value="guaA_Nterm"/>
    <property type="match status" value="1"/>
</dbReference>
<dbReference type="NCBIfam" id="NF000848">
    <property type="entry name" value="PRK00074.1"/>
    <property type="match status" value="1"/>
</dbReference>
<dbReference type="PANTHER" id="PTHR11922:SF2">
    <property type="entry name" value="GMP SYNTHASE [GLUTAMINE-HYDROLYZING]"/>
    <property type="match status" value="1"/>
</dbReference>
<dbReference type="PANTHER" id="PTHR11922">
    <property type="entry name" value="GMP SYNTHASE-RELATED"/>
    <property type="match status" value="1"/>
</dbReference>
<dbReference type="Pfam" id="PF00117">
    <property type="entry name" value="GATase"/>
    <property type="match status" value="1"/>
</dbReference>
<dbReference type="Pfam" id="PF00958">
    <property type="entry name" value="GMP_synt_C"/>
    <property type="match status" value="1"/>
</dbReference>
<dbReference type="Pfam" id="PF02540">
    <property type="entry name" value="NAD_synthase"/>
    <property type="match status" value="1"/>
</dbReference>
<dbReference type="PRINTS" id="PR00097">
    <property type="entry name" value="ANTSNTHASEII"/>
</dbReference>
<dbReference type="PRINTS" id="PR00099">
    <property type="entry name" value="CPSGATASE"/>
</dbReference>
<dbReference type="PRINTS" id="PR00096">
    <property type="entry name" value="GATASE"/>
</dbReference>
<dbReference type="SUPFAM" id="SSF52402">
    <property type="entry name" value="Adenine nucleotide alpha hydrolases-like"/>
    <property type="match status" value="1"/>
</dbReference>
<dbReference type="SUPFAM" id="SSF52317">
    <property type="entry name" value="Class I glutamine amidotransferase-like"/>
    <property type="match status" value="1"/>
</dbReference>
<dbReference type="SUPFAM" id="SSF54810">
    <property type="entry name" value="GMP synthetase C-terminal dimerisation domain"/>
    <property type="match status" value="1"/>
</dbReference>
<dbReference type="PROSITE" id="PS51273">
    <property type="entry name" value="GATASE_TYPE_1"/>
    <property type="match status" value="1"/>
</dbReference>
<dbReference type="PROSITE" id="PS51553">
    <property type="entry name" value="GMPS_ATP_PPASE"/>
    <property type="match status" value="1"/>
</dbReference>
<name>GUAA_SHEPW</name>